<reference key="1">
    <citation type="journal article" date="1991" name="Mol. Microbiol.">
        <title>Structure and sequence of the rfb (O antigen) gene cluster of Salmonella serovar typhimurium (strain LT2).</title>
        <authorList>
            <person name="Jiang X.-M."/>
            <person name="Neal B."/>
            <person name="Santiago F."/>
            <person name="Lee S.J."/>
            <person name="Romana L.K."/>
            <person name="Reeves P.R."/>
        </authorList>
    </citation>
    <scope>NUCLEOTIDE SEQUENCE [GENOMIC DNA]</scope>
    <source>
        <strain>LT2</strain>
    </source>
</reference>
<reference key="2">
    <citation type="journal article" date="2001" name="Nature">
        <title>Complete genome sequence of Salmonella enterica serovar Typhimurium LT2.</title>
        <authorList>
            <person name="McClelland M."/>
            <person name="Sanderson K.E."/>
            <person name="Spieth J."/>
            <person name="Clifton S.W."/>
            <person name="Latreille P."/>
            <person name="Courtney L."/>
            <person name="Porwollik S."/>
            <person name="Ali J."/>
            <person name="Dante M."/>
            <person name="Du F."/>
            <person name="Hou S."/>
            <person name="Layman D."/>
            <person name="Leonard S."/>
            <person name="Nguyen C."/>
            <person name="Scott K."/>
            <person name="Holmes A."/>
            <person name="Grewal N."/>
            <person name="Mulvaney E."/>
            <person name="Ryan E."/>
            <person name="Sun H."/>
            <person name="Florea L."/>
            <person name="Miller W."/>
            <person name="Stoneking T."/>
            <person name="Nhan M."/>
            <person name="Waterston R."/>
            <person name="Wilson R.K."/>
        </authorList>
    </citation>
    <scope>NUCLEOTIDE SEQUENCE [LARGE SCALE GENOMIC DNA]</scope>
    <source>
        <strain>LT2 / SGSC1412 / ATCC 700720</strain>
    </source>
</reference>
<organism>
    <name type="scientific">Salmonella typhimurium (strain LT2 / SGSC1412 / ATCC 700720)</name>
    <dbReference type="NCBI Taxonomy" id="99287"/>
    <lineage>
        <taxon>Bacteria</taxon>
        <taxon>Pseudomonadati</taxon>
        <taxon>Pseudomonadota</taxon>
        <taxon>Gammaproteobacteria</taxon>
        <taxon>Enterobacterales</taxon>
        <taxon>Enterobacteriaceae</taxon>
        <taxon>Salmonella</taxon>
    </lineage>
</organism>
<feature type="chain" id="PRO_0000189411" description="Protein RfbI">
    <location>
        <begin position="1"/>
        <end position="330"/>
    </location>
</feature>
<feature type="domain" description="2Fe-2S ferredoxin-type" evidence="1">
    <location>
        <begin position="3"/>
        <end position="89"/>
    </location>
</feature>
<feature type="domain" description="FAD-binding FR-type" evidence="2">
    <location>
        <begin position="94"/>
        <end position="192"/>
    </location>
</feature>
<feature type="binding site" evidence="1">
    <location>
        <position position="37"/>
    </location>
    <ligand>
        <name>[2Fe-2S] cluster</name>
        <dbReference type="ChEBI" id="CHEBI:190135"/>
    </ligand>
</feature>
<feature type="binding site" evidence="1">
    <location>
        <position position="42"/>
    </location>
    <ligand>
        <name>[2Fe-2S] cluster</name>
        <dbReference type="ChEBI" id="CHEBI:190135"/>
    </ligand>
</feature>
<feature type="binding site" evidence="1">
    <location>
        <position position="45"/>
    </location>
    <ligand>
        <name>[2Fe-2S] cluster</name>
        <dbReference type="ChEBI" id="CHEBI:190135"/>
    </ligand>
</feature>
<proteinExistence type="predicted"/>
<comment type="cofactor">
    <cofactor evidence="3">
        <name>[2Fe-2S] cluster</name>
        <dbReference type="ChEBI" id="CHEBI:190135"/>
    </cofactor>
    <text evidence="3">Binds 1 [2Fe-2S] cluster.</text>
</comment>
<comment type="pathway">
    <text>Bacterial outer membrane biogenesis; LPS O-antigen biosynthesis.</text>
</comment>
<keyword id="KW-0001">2Fe-2S</keyword>
<keyword id="KW-0408">Iron</keyword>
<keyword id="KW-0411">Iron-sulfur</keyword>
<keyword id="KW-0448">Lipopolysaccharide biosynthesis</keyword>
<keyword id="KW-0479">Metal-binding</keyword>
<keyword id="KW-1185">Reference proteome</keyword>
<accession>P26395</accession>
<sequence>MSHIIKIFPSNIEFSGREDESILDAALSAGIHLEHSCKAGDCGICESDLLAGEVVDSKGNIFGQGDKILTCCCKPKTALELNAHFFPELAGQTKKIVPCKVNSAVLVSGDVMTLKLRTPPTAKIGFLPGQYINLHYKGVTRSYSIANSDESNGIELHVRNVPNGQMSSLIFGELQENTLMRIEGPCGTFFIRESDRPIIFLAGGTGFAPVKSMVEHLIQGKCRREIYIYWGMQYSKDFYSALPQQWSEQHDNVHYIPVVSGDDAEWGGRKGFVHHAVMDDFDSLEFFDIYACGSPVMIDASKKDFMMKNLSVEHFYSDAFTASNNIEDNL</sequence>
<protein>
    <recommendedName>
        <fullName>Protein RfbI</fullName>
    </recommendedName>
</protein>
<name>RFBI_SALTY</name>
<dbReference type="EMBL" id="X56793">
    <property type="protein sequence ID" value="CAA40119.1"/>
    <property type="molecule type" value="Genomic_DNA"/>
</dbReference>
<dbReference type="EMBL" id="AE006468">
    <property type="protein sequence ID" value="AAL20997.1"/>
    <property type="molecule type" value="Genomic_DNA"/>
</dbReference>
<dbReference type="PIR" id="S15303">
    <property type="entry name" value="S15303"/>
</dbReference>
<dbReference type="RefSeq" id="NP_461038.1">
    <property type="nucleotide sequence ID" value="NC_003197.2"/>
</dbReference>
<dbReference type="RefSeq" id="WP_000018226.1">
    <property type="nucleotide sequence ID" value="NC_003197.2"/>
</dbReference>
<dbReference type="SMR" id="P26395"/>
<dbReference type="STRING" id="99287.STM2093"/>
<dbReference type="PaxDb" id="99287-STM2093"/>
<dbReference type="DNASU" id="1253614"/>
<dbReference type="GeneID" id="1253614"/>
<dbReference type="KEGG" id="stm:STM2093"/>
<dbReference type="PATRIC" id="fig|99287.12.peg.2215"/>
<dbReference type="HOGENOM" id="CLU_003827_7_0_6"/>
<dbReference type="OMA" id="IGLPYGC"/>
<dbReference type="PhylomeDB" id="P26395"/>
<dbReference type="BioCyc" id="SENT99287:STM2093-MONOMER"/>
<dbReference type="UniPathway" id="UPA00281"/>
<dbReference type="Proteomes" id="UP000001014">
    <property type="component" value="Chromosome"/>
</dbReference>
<dbReference type="GO" id="GO:0051537">
    <property type="term" value="F:2 iron, 2 sulfur cluster binding"/>
    <property type="evidence" value="ECO:0007669"/>
    <property type="project" value="UniProtKB-KW"/>
</dbReference>
<dbReference type="GO" id="GO:0046872">
    <property type="term" value="F:metal ion binding"/>
    <property type="evidence" value="ECO:0007669"/>
    <property type="project" value="UniProtKB-KW"/>
</dbReference>
<dbReference type="GO" id="GO:0016491">
    <property type="term" value="F:oxidoreductase activity"/>
    <property type="evidence" value="ECO:0000318"/>
    <property type="project" value="GO_Central"/>
</dbReference>
<dbReference type="GO" id="GO:0009243">
    <property type="term" value="P:O antigen biosynthetic process"/>
    <property type="evidence" value="ECO:0007669"/>
    <property type="project" value="UniProtKB-UniPathway"/>
</dbReference>
<dbReference type="CDD" id="cd00207">
    <property type="entry name" value="fer2"/>
    <property type="match status" value="1"/>
</dbReference>
<dbReference type="CDD" id="cd06189">
    <property type="entry name" value="flavin_oxioreductase"/>
    <property type="match status" value="1"/>
</dbReference>
<dbReference type="Gene3D" id="3.10.20.30">
    <property type="match status" value="1"/>
</dbReference>
<dbReference type="Gene3D" id="3.40.50.80">
    <property type="entry name" value="Nucleotide-binding domain of ferredoxin-NADP reductase (FNR) module"/>
    <property type="match status" value="1"/>
</dbReference>
<dbReference type="Gene3D" id="2.40.30.10">
    <property type="entry name" value="Translation factors"/>
    <property type="match status" value="1"/>
</dbReference>
<dbReference type="InterPro" id="IPR036010">
    <property type="entry name" value="2Fe-2S_ferredoxin-like_sf"/>
</dbReference>
<dbReference type="InterPro" id="IPR001041">
    <property type="entry name" value="2Fe-2S_ferredoxin-type"/>
</dbReference>
<dbReference type="InterPro" id="IPR006058">
    <property type="entry name" value="2Fe2S_fd_BS"/>
</dbReference>
<dbReference type="InterPro" id="IPR012675">
    <property type="entry name" value="Beta-grasp_dom_sf"/>
</dbReference>
<dbReference type="InterPro" id="IPR008333">
    <property type="entry name" value="Cbr1-like_FAD-bd_dom"/>
</dbReference>
<dbReference type="InterPro" id="IPR017927">
    <property type="entry name" value="FAD-bd_FR_type"/>
</dbReference>
<dbReference type="InterPro" id="IPR001709">
    <property type="entry name" value="Flavoprot_Pyr_Nucl_cyt_Rdtase"/>
</dbReference>
<dbReference type="InterPro" id="IPR039261">
    <property type="entry name" value="FNR_nucleotide-bd"/>
</dbReference>
<dbReference type="InterPro" id="IPR050415">
    <property type="entry name" value="MRET"/>
</dbReference>
<dbReference type="InterPro" id="IPR001433">
    <property type="entry name" value="OxRdtase_FAD/NAD-bd"/>
</dbReference>
<dbReference type="InterPro" id="IPR017938">
    <property type="entry name" value="Riboflavin_synthase-like_b-brl"/>
</dbReference>
<dbReference type="PANTHER" id="PTHR47354">
    <property type="entry name" value="NADH OXIDOREDUCTASE HCR"/>
    <property type="match status" value="1"/>
</dbReference>
<dbReference type="PANTHER" id="PTHR47354:SF5">
    <property type="entry name" value="PROTEIN RFBI"/>
    <property type="match status" value="1"/>
</dbReference>
<dbReference type="Pfam" id="PF00970">
    <property type="entry name" value="FAD_binding_6"/>
    <property type="match status" value="1"/>
</dbReference>
<dbReference type="Pfam" id="PF00111">
    <property type="entry name" value="Fer2"/>
    <property type="match status" value="1"/>
</dbReference>
<dbReference type="Pfam" id="PF00175">
    <property type="entry name" value="NAD_binding_1"/>
    <property type="match status" value="1"/>
</dbReference>
<dbReference type="PRINTS" id="PR00371">
    <property type="entry name" value="FPNCR"/>
</dbReference>
<dbReference type="PRINTS" id="PR00410">
    <property type="entry name" value="PHEHYDRXLASE"/>
</dbReference>
<dbReference type="SUPFAM" id="SSF54292">
    <property type="entry name" value="2Fe-2S ferredoxin-like"/>
    <property type="match status" value="1"/>
</dbReference>
<dbReference type="SUPFAM" id="SSF52343">
    <property type="entry name" value="Ferredoxin reductase-like, C-terminal NADP-linked domain"/>
    <property type="match status" value="1"/>
</dbReference>
<dbReference type="SUPFAM" id="SSF63380">
    <property type="entry name" value="Riboflavin synthase domain-like"/>
    <property type="match status" value="1"/>
</dbReference>
<dbReference type="PROSITE" id="PS00197">
    <property type="entry name" value="2FE2S_FER_1"/>
    <property type="match status" value="1"/>
</dbReference>
<dbReference type="PROSITE" id="PS51085">
    <property type="entry name" value="2FE2S_FER_2"/>
    <property type="match status" value="1"/>
</dbReference>
<dbReference type="PROSITE" id="PS51384">
    <property type="entry name" value="FAD_FR"/>
    <property type="match status" value="1"/>
</dbReference>
<gene>
    <name type="primary">rfbI</name>
    <name type="ordered locus">STM2093</name>
</gene>
<evidence type="ECO:0000255" key="1">
    <source>
        <dbReference type="PROSITE-ProRule" id="PRU00465"/>
    </source>
</evidence>
<evidence type="ECO:0000255" key="2">
    <source>
        <dbReference type="PROSITE-ProRule" id="PRU00716"/>
    </source>
</evidence>
<evidence type="ECO:0000305" key="3"/>